<gene>
    <name type="primary">GF14C</name>
</gene>
<comment type="similarity">
    <text evidence="2">Belongs to the 14-3-3 family.</text>
</comment>
<sequence length="258" mass="29209">MASTKERENFVYVAKLAEQAERYEEMVEAMKNVANLNVELTVEERNLLSVGYKNVVGARRASWRILSSIEQKEEAKGNDVSVKRIKEYRLKVESELSNICSDIMTVIDEYLIPSSSSGEPSVFFYKMKGDYYRYLAEFKSGDERKEAADHSMKAYQLASTTAEAELASTHPIRLGLALNFSVFYYEILNSPERACHLAKQAFDEAISELDTLSEESYKDSTLIMQLLRDNLTLWTSDIPEDGEEQKVDSARADGGDDA</sequence>
<organism>
    <name type="scientific">Glycine max</name>
    <name type="common">Soybean</name>
    <name type="synonym">Glycine hispida</name>
    <dbReference type="NCBI Taxonomy" id="3847"/>
    <lineage>
        <taxon>Eukaryota</taxon>
        <taxon>Viridiplantae</taxon>
        <taxon>Streptophyta</taxon>
        <taxon>Embryophyta</taxon>
        <taxon>Tracheophyta</taxon>
        <taxon>Spermatophyta</taxon>
        <taxon>Magnoliopsida</taxon>
        <taxon>eudicotyledons</taxon>
        <taxon>Gunneridae</taxon>
        <taxon>Pentapetalae</taxon>
        <taxon>rosids</taxon>
        <taxon>fabids</taxon>
        <taxon>Fabales</taxon>
        <taxon>Fabaceae</taxon>
        <taxon>Papilionoideae</taxon>
        <taxon>50 kb inversion clade</taxon>
        <taxon>NPAAA clade</taxon>
        <taxon>indigoferoid/millettioid clade</taxon>
        <taxon>Phaseoleae</taxon>
        <taxon>Glycine</taxon>
        <taxon>Glycine subgen. Soja</taxon>
    </lineage>
</organism>
<dbReference type="EMBL" id="U70535">
    <property type="protein sequence ID" value="AAB09582.1"/>
    <property type="molecule type" value="mRNA"/>
</dbReference>
<dbReference type="PIR" id="T08843">
    <property type="entry name" value="T08843"/>
</dbReference>
<dbReference type="SMR" id="Q96452"/>
<dbReference type="STRING" id="3847.Q96452"/>
<dbReference type="PaxDb" id="3847-GLYMA05G29080.10"/>
<dbReference type="ProMEX" id="Q96452"/>
<dbReference type="eggNOG" id="KOG0841">
    <property type="taxonomic scope" value="Eukaryota"/>
</dbReference>
<dbReference type="InParanoid" id="Q96452"/>
<dbReference type="Proteomes" id="UP000008827">
    <property type="component" value="Unplaced"/>
</dbReference>
<dbReference type="GO" id="GO:0005737">
    <property type="term" value="C:cytoplasm"/>
    <property type="evidence" value="ECO:0000318"/>
    <property type="project" value="GO_Central"/>
</dbReference>
<dbReference type="GO" id="GO:0008104">
    <property type="term" value="P:protein localization"/>
    <property type="evidence" value="ECO:0000318"/>
    <property type="project" value="GO_Central"/>
</dbReference>
<dbReference type="GO" id="GO:0007165">
    <property type="term" value="P:signal transduction"/>
    <property type="evidence" value="ECO:0000318"/>
    <property type="project" value="GO_Central"/>
</dbReference>
<dbReference type="FunFam" id="1.20.190.20:FF:000002">
    <property type="entry name" value="14-3-3 protein epsilon"/>
    <property type="match status" value="1"/>
</dbReference>
<dbReference type="Gene3D" id="1.20.190.20">
    <property type="entry name" value="14-3-3 domain"/>
    <property type="match status" value="1"/>
</dbReference>
<dbReference type="InterPro" id="IPR000308">
    <property type="entry name" value="14-3-3"/>
</dbReference>
<dbReference type="InterPro" id="IPR023409">
    <property type="entry name" value="14-3-3_CS"/>
</dbReference>
<dbReference type="InterPro" id="IPR036815">
    <property type="entry name" value="14-3-3_dom_sf"/>
</dbReference>
<dbReference type="InterPro" id="IPR023410">
    <property type="entry name" value="14-3-3_domain"/>
</dbReference>
<dbReference type="PANTHER" id="PTHR18860">
    <property type="entry name" value="14-3-3 PROTEIN"/>
    <property type="match status" value="1"/>
</dbReference>
<dbReference type="Pfam" id="PF00244">
    <property type="entry name" value="14-3-3"/>
    <property type="match status" value="1"/>
</dbReference>
<dbReference type="PIRSF" id="PIRSF000868">
    <property type="entry name" value="14-3-3"/>
    <property type="match status" value="1"/>
</dbReference>
<dbReference type="PRINTS" id="PR00305">
    <property type="entry name" value="1433ZETA"/>
</dbReference>
<dbReference type="SMART" id="SM00101">
    <property type="entry name" value="14_3_3"/>
    <property type="match status" value="1"/>
</dbReference>
<dbReference type="SUPFAM" id="SSF48445">
    <property type="entry name" value="14-3-3 protein"/>
    <property type="match status" value="1"/>
</dbReference>
<dbReference type="PROSITE" id="PS00796">
    <property type="entry name" value="1433_1"/>
    <property type="match status" value="1"/>
</dbReference>
<dbReference type="PROSITE" id="PS00797">
    <property type="entry name" value="1433_2"/>
    <property type="match status" value="1"/>
</dbReference>
<name>1433C_SOYBN</name>
<proteinExistence type="evidence at transcript level"/>
<protein>
    <recommendedName>
        <fullName>14-3-3-like protein C</fullName>
    </recommendedName>
    <alternativeName>
        <fullName>SGF14C</fullName>
    </alternativeName>
</protein>
<evidence type="ECO:0000256" key="1">
    <source>
        <dbReference type="SAM" id="MobiDB-lite"/>
    </source>
</evidence>
<evidence type="ECO:0000305" key="2"/>
<keyword id="KW-1185">Reference proteome</keyword>
<reference key="1">
    <citation type="submission" date="1996-09" db="EMBL/GenBank/DDBJ databases">
        <authorList>
            <person name="Ryu G.R."/>
            <person name="Yoo C.M."/>
            <person name="Jeong H.J."/>
            <person name="Hong J.C."/>
        </authorList>
    </citation>
    <scope>NUCLEOTIDE SEQUENCE [MRNA]</scope>
    <source>
        <strain>cv. Williams</strain>
    </source>
</reference>
<feature type="chain" id="PRO_0000058703" description="14-3-3-like protein C">
    <location>
        <begin position="1"/>
        <end position="258"/>
    </location>
</feature>
<feature type="region of interest" description="Disordered" evidence="1">
    <location>
        <begin position="237"/>
        <end position="258"/>
    </location>
</feature>
<feature type="compositionally biased region" description="Basic and acidic residues" evidence="1">
    <location>
        <begin position="244"/>
        <end position="258"/>
    </location>
</feature>
<accession>Q96452</accession>